<proteinExistence type="inferred from homology"/>
<feature type="chain" id="PRO_1000053058" description="Large ribosomal subunit protein uL18">
    <location>
        <begin position="1"/>
        <end position="193"/>
    </location>
</feature>
<protein>
    <recommendedName>
        <fullName evidence="1">Large ribosomal subunit protein uL18</fullName>
    </recommendedName>
    <alternativeName>
        <fullName evidence="2">50S ribosomal protein L18</fullName>
    </alternativeName>
</protein>
<sequence>MAKNAKFRVPFRRRREGKTDFRQRLGLLLSGKPRLVARKSLNNVIAQLMAYDEKGDVVLVSAHSRELVKMGYKGHCGNLPAAYLTGLLLGKKAVKEGAEEAILDKGLHRATKGAAIFAVLKGALDAGMDIPHGDEIIADEERLNGTHVKNYAESLKEDADAYKKQFSKYLEKGLNPEDLPEHVEELKEKILNL</sequence>
<organism>
    <name type="scientific">Methanococcus maripaludis (strain C7 / ATCC BAA-1331)</name>
    <dbReference type="NCBI Taxonomy" id="426368"/>
    <lineage>
        <taxon>Archaea</taxon>
        <taxon>Methanobacteriati</taxon>
        <taxon>Methanobacteriota</taxon>
        <taxon>Methanomada group</taxon>
        <taxon>Methanococci</taxon>
        <taxon>Methanococcales</taxon>
        <taxon>Methanococcaceae</taxon>
        <taxon>Methanococcus</taxon>
    </lineage>
</organism>
<accession>A6VH04</accession>
<comment type="function">
    <text evidence="1">This is one of the proteins that bind and probably mediate the attachment of the 5S RNA into the large ribosomal subunit, where it forms part of the central protuberance.</text>
</comment>
<comment type="subunit">
    <text evidence="1">Part of the 50S ribosomal subunit. Contacts the 5S and 23S rRNAs.</text>
</comment>
<comment type="similarity">
    <text evidence="1">Belongs to the universal ribosomal protein uL18 family.</text>
</comment>
<dbReference type="EMBL" id="CP000745">
    <property type="protein sequence ID" value="ABR65730.1"/>
    <property type="molecule type" value="Genomic_DNA"/>
</dbReference>
<dbReference type="SMR" id="A6VH04"/>
<dbReference type="STRING" id="426368.MmarC7_0663"/>
<dbReference type="KEGG" id="mmz:MmarC7_0663"/>
<dbReference type="eggNOG" id="arCOG04088">
    <property type="taxonomic scope" value="Archaea"/>
</dbReference>
<dbReference type="HOGENOM" id="CLU_056222_2_0_2"/>
<dbReference type="OrthoDB" id="8644at2157"/>
<dbReference type="GO" id="GO:0022625">
    <property type="term" value="C:cytosolic large ribosomal subunit"/>
    <property type="evidence" value="ECO:0007669"/>
    <property type="project" value="TreeGrafter"/>
</dbReference>
<dbReference type="GO" id="GO:0008097">
    <property type="term" value="F:5S rRNA binding"/>
    <property type="evidence" value="ECO:0007669"/>
    <property type="project" value="InterPro"/>
</dbReference>
<dbReference type="GO" id="GO:0003735">
    <property type="term" value="F:structural constituent of ribosome"/>
    <property type="evidence" value="ECO:0007669"/>
    <property type="project" value="InterPro"/>
</dbReference>
<dbReference type="GO" id="GO:0000027">
    <property type="term" value="P:ribosomal large subunit assembly"/>
    <property type="evidence" value="ECO:0007669"/>
    <property type="project" value="TreeGrafter"/>
</dbReference>
<dbReference type="GO" id="GO:0006412">
    <property type="term" value="P:translation"/>
    <property type="evidence" value="ECO:0007669"/>
    <property type="project" value="UniProtKB-UniRule"/>
</dbReference>
<dbReference type="CDD" id="cd00432">
    <property type="entry name" value="Ribosomal_L18_L5e"/>
    <property type="match status" value="1"/>
</dbReference>
<dbReference type="Gene3D" id="3.30.420.100">
    <property type="match status" value="1"/>
</dbReference>
<dbReference type="HAMAP" id="MF_01337_A">
    <property type="entry name" value="Ribosomal_uL18_A"/>
    <property type="match status" value="1"/>
</dbReference>
<dbReference type="InterPro" id="IPR005485">
    <property type="entry name" value="Rbsml_uL18_euk"/>
</dbReference>
<dbReference type="NCBIfam" id="NF006342">
    <property type="entry name" value="PRK08569.1"/>
    <property type="match status" value="1"/>
</dbReference>
<dbReference type="PANTHER" id="PTHR23410:SF12">
    <property type="entry name" value="LARGE RIBOSOMAL SUBUNIT PROTEIN UL18"/>
    <property type="match status" value="1"/>
</dbReference>
<dbReference type="PANTHER" id="PTHR23410">
    <property type="entry name" value="RIBOSOMAL PROTEIN L5-RELATED"/>
    <property type="match status" value="1"/>
</dbReference>
<dbReference type="Pfam" id="PF17144">
    <property type="entry name" value="Ribosomal_L5e"/>
    <property type="match status" value="2"/>
</dbReference>
<dbReference type="SUPFAM" id="SSF53137">
    <property type="entry name" value="Translational machinery components"/>
    <property type="match status" value="1"/>
</dbReference>
<evidence type="ECO:0000255" key="1">
    <source>
        <dbReference type="HAMAP-Rule" id="MF_01337"/>
    </source>
</evidence>
<evidence type="ECO:0000305" key="2"/>
<reference key="1">
    <citation type="submission" date="2007-06" db="EMBL/GenBank/DDBJ databases">
        <title>Complete sequence of Methanococcus maripaludis C7.</title>
        <authorList>
            <consortium name="US DOE Joint Genome Institute"/>
            <person name="Copeland A."/>
            <person name="Lucas S."/>
            <person name="Lapidus A."/>
            <person name="Barry K."/>
            <person name="Glavina del Rio T."/>
            <person name="Dalin E."/>
            <person name="Tice H."/>
            <person name="Pitluck S."/>
            <person name="Clum A."/>
            <person name="Schmutz J."/>
            <person name="Larimer F."/>
            <person name="Land M."/>
            <person name="Hauser L."/>
            <person name="Kyrpides N."/>
            <person name="Anderson I."/>
            <person name="Sieprawska-Lupa M."/>
            <person name="Whitman W.B."/>
            <person name="Richardson P."/>
        </authorList>
    </citation>
    <scope>NUCLEOTIDE SEQUENCE [LARGE SCALE GENOMIC DNA]</scope>
    <source>
        <strain>C7 / ATCC BAA-1331</strain>
    </source>
</reference>
<name>RL18_METM7</name>
<keyword id="KW-0687">Ribonucleoprotein</keyword>
<keyword id="KW-0689">Ribosomal protein</keyword>
<keyword id="KW-0694">RNA-binding</keyword>
<keyword id="KW-0699">rRNA-binding</keyword>
<gene>
    <name evidence="1" type="primary">rpl18</name>
    <name type="ordered locus">MmarC7_0663</name>
</gene>